<comment type="function">
    <text evidence="1">Aquaporins facilitate the transport of water and small neutral solutes across cell membranes. May be involved in transport from the vacuolar compartment to the cytoplasm (By similarity).</text>
</comment>
<comment type="subcellular location">
    <subcellularLocation>
        <location evidence="1">Vacuole membrane</location>
        <topology evidence="1">Multi-pass membrane protein</topology>
    </subcellularLocation>
    <text>Tonoplast.</text>
</comment>
<comment type="tissue specificity">
    <text evidence="3">Expressed in leaves and at lower levels in roots.</text>
</comment>
<comment type="domain">
    <text>Aquaporins contain two tandem repeats each containing three membrane-spanning domains and a pore-forming loop with the signature motif Asn-Pro-Ala (NPA).</text>
</comment>
<comment type="similarity">
    <text evidence="4">Belongs to the MIP/aquaporin (TC 1.A.8) family. TIP (TC 1.A.8.10) subfamily.</text>
</comment>
<evidence type="ECO:0000250" key="1"/>
<evidence type="ECO:0000255" key="2"/>
<evidence type="ECO:0000269" key="3">
    <source>
    </source>
</evidence>
<evidence type="ECO:0000305" key="4"/>
<sequence length="264" mass="27514">MSTAAARPGRRFTVGRSEDATHPDTIRAAISEFLATAIFVFAAEGSILSLGKLYQDMSTPGGLVAVSLAHALALAVAVAVAVNISGGHVNPAITFGALLGGRLSLIRALFYWLAQLLGAVVATLLLRLTTGGMRPPGFALASGVGDWHAVLLEATMTFGLMYAYYATVIDPKRGHVGTIAPLAVGFLLGANMLAGGPFDGAGMNPARVFGPALVGWRWRHHWVYWLGPFVGAGLAGLLYEYLVIPSADAAPHGGAHQPLAPEDY</sequence>
<dbReference type="EMBL" id="AB114828">
    <property type="protein sequence ID" value="BAC79357.1"/>
    <property type="molecule type" value="mRNA"/>
</dbReference>
<dbReference type="EMBL" id="AC023240">
    <property type="protein sequence ID" value="AAG13544.1"/>
    <property type="molecule type" value="Genomic_DNA"/>
</dbReference>
<dbReference type="EMBL" id="DP000086">
    <property type="protein sequence ID" value="AAP54406.1"/>
    <property type="molecule type" value="Genomic_DNA"/>
</dbReference>
<dbReference type="EMBL" id="AP008216">
    <property type="protein sequence ID" value="BAF26847.1"/>
    <property type="molecule type" value="Genomic_DNA"/>
</dbReference>
<dbReference type="EMBL" id="AP014966">
    <property type="protein sequence ID" value="BAT11442.1"/>
    <property type="molecule type" value="Genomic_DNA"/>
</dbReference>
<dbReference type="EMBL" id="CM000147">
    <property type="protein sequence ID" value="EAZ16527.1"/>
    <property type="molecule type" value="Genomic_DNA"/>
</dbReference>
<dbReference type="EMBL" id="AK111931">
    <property type="protein sequence ID" value="BAG99486.1"/>
    <property type="molecule type" value="mRNA"/>
</dbReference>
<dbReference type="RefSeq" id="XP_015614155.1">
    <property type="nucleotide sequence ID" value="XM_015758669.1"/>
</dbReference>
<dbReference type="SMR" id="Q9FWV6"/>
<dbReference type="FunCoup" id="Q9FWV6">
    <property type="interactions" value="377"/>
</dbReference>
<dbReference type="STRING" id="39947.Q9FWV6"/>
<dbReference type="PaxDb" id="39947-Q9FWV6"/>
<dbReference type="EnsemblPlants" id="Os10t0492600-01">
    <property type="protein sequence ID" value="Os10t0492600-01"/>
    <property type="gene ID" value="Os10g0492600"/>
</dbReference>
<dbReference type="Gramene" id="Os10t0492600-01">
    <property type="protein sequence ID" value="Os10t0492600-01"/>
    <property type="gene ID" value="Os10g0492600"/>
</dbReference>
<dbReference type="KEGG" id="dosa:Os10g0492600"/>
<dbReference type="eggNOG" id="KOG0223">
    <property type="taxonomic scope" value="Eukaryota"/>
</dbReference>
<dbReference type="HOGENOM" id="CLU_020019_3_4_1"/>
<dbReference type="InParanoid" id="Q9FWV6"/>
<dbReference type="OMA" id="FAVMHAY"/>
<dbReference type="OrthoDB" id="3222at2759"/>
<dbReference type="Proteomes" id="UP000000763">
    <property type="component" value="Chromosome 10"/>
</dbReference>
<dbReference type="Proteomes" id="UP000007752">
    <property type="component" value="Chromosome 10"/>
</dbReference>
<dbReference type="Proteomes" id="UP000059680">
    <property type="component" value="Chromosome 10"/>
</dbReference>
<dbReference type="GO" id="GO:0016020">
    <property type="term" value="C:membrane"/>
    <property type="evidence" value="ECO:0000318"/>
    <property type="project" value="GO_Central"/>
</dbReference>
<dbReference type="GO" id="GO:0005774">
    <property type="term" value="C:vacuolar membrane"/>
    <property type="evidence" value="ECO:0007669"/>
    <property type="project" value="UniProtKB-SubCell"/>
</dbReference>
<dbReference type="GO" id="GO:0015250">
    <property type="term" value="F:water channel activity"/>
    <property type="evidence" value="ECO:0000318"/>
    <property type="project" value="GO_Central"/>
</dbReference>
<dbReference type="GO" id="GO:0006833">
    <property type="term" value="P:water transport"/>
    <property type="evidence" value="ECO:0000318"/>
    <property type="project" value="GO_Central"/>
</dbReference>
<dbReference type="CDD" id="cd00333">
    <property type="entry name" value="MIP"/>
    <property type="match status" value="1"/>
</dbReference>
<dbReference type="FunFam" id="1.20.1080.10:FF:000002">
    <property type="entry name" value="Probable aquaporin TIP1-1"/>
    <property type="match status" value="1"/>
</dbReference>
<dbReference type="Gene3D" id="1.20.1080.10">
    <property type="entry name" value="Glycerol uptake facilitator protein"/>
    <property type="match status" value="1"/>
</dbReference>
<dbReference type="InterPro" id="IPR023271">
    <property type="entry name" value="Aquaporin-like"/>
</dbReference>
<dbReference type="InterPro" id="IPR034294">
    <property type="entry name" value="Aquaporin_transptr"/>
</dbReference>
<dbReference type="InterPro" id="IPR000425">
    <property type="entry name" value="MIP"/>
</dbReference>
<dbReference type="InterPro" id="IPR022357">
    <property type="entry name" value="MIP_CS"/>
</dbReference>
<dbReference type="NCBIfam" id="TIGR00861">
    <property type="entry name" value="MIP"/>
    <property type="match status" value="1"/>
</dbReference>
<dbReference type="PANTHER" id="PTHR45665:SF23">
    <property type="entry name" value="AQUAPORIN TIP3-2-RELATED"/>
    <property type="match status" value="1"/>
</dbReference>
<dbReference type="PANTHER" id="PTHR45665">
    <property type="entry name" value="AQUAPORIN-8"/>
    <property type="match status" value="1"/>
</dbReference>
<dbReference type="Pfam" id="PF00230">
    <property type="entry name" value="MIP"/>
    <property type="match status" value="1"/>
</dbReference>
<dbReference type="PRINTS" id="PR00783">
    <property type="entry name" value="MINTRINSICP"/>
</dbReference>
<dbReference type="SUPFAM" id="SSF81338">
    <property type="entry name" value="Aquaporin-like"/>
    <property type="match status" value="1"/>
</dbReference>
<dbReference type="PROSITE" id="PS00221">
    <property type="entry name" value="MIP"/>
    <property type="match status" value="1"/>
</dbReference>
<organism>
    <name type="scientific">Oryza sativa subsp. japonica</name>
    <name type="common">Rice</name>
    <dbReference type="NCBI Taxonomy" id="39947"/>
    <lineage>
        <taxon>Eukaryota</taxon>
        <taxon>Viridiplantae</taxon>
        <taxon>Streptophyta</taxon>
        <taxon>Embryophyta</taxon>
        <taxon>Tracheophyta</taxon>
        <taxon>Spermatophyta</taxon>
        <taxon>Magnoliopsida</taxon>
        <taxon>Liliopsida</taxon>
        <taxon>Poales</taxon>
        <taxon>Poaceae</taxon>
        <taxon>BOP clade</taxon>
        <taxon>Oryzoideae</taxon>
        <taxon>Oryzeae</taxon>
        <taxon>Oryzinae</taxon>
        <taxon>Oryza</taxon>
        <taxon>Oryza sativa</taxon>
    </lineage>
</organism>
<keyword id="KW-0472">Membrane</keyword>
<keyword id="KW-1185">Reference proteome</keyword>
<keyword id="KW-0677">Repeat</keyword>
<keyword id="KW-0812">Transmembrane</keyword>
<keyword id="KW-1133">Transmembrane helix</keyword>
<keyword id="KW-0813">Transport</keyword>
<keyword id="KW-0926">Vacuole</keyword>
<protein>
    <recommendedName>
        <fullName>Probable aquaporin TIP3-1</fullName>
    </recommendedName>
    <alternativeName>
        <fullName>Tonoplast intrinsic protein 3-1</fullName>
        <shortName>OsTIP3;1</shortName>
    </alternativeName>
</protein>
<reference key="1">
    <citation type="submission" date="2003-07" db="EMBL/GenBank/DDBJ databases">
        <title>Molecular characterization and expression analysis of tonoplast intrinsic protein isoforms from rice.</title>
        <authorList>
            <person name="Takahashi H."/>
            <person name="Morita S."/>
            <person name="Masumura T."/>
            <person name="Tanaka K."/>
        </authorList>
    </citation>
    <scope>NUCLEOTIDE SEQUENCE [MRNA]</scope>
    <source>
        <strain>cv. Nipponbare</strain>
    </source>
</reference>
<reference key="2">
    <citation type="journal article" date="2003" name="Science">
        <title>In-depth view of structure, activity, and evolution of rice chromosome 10.</title>
        <authorList>
            <person name="Yu Y."/>
            <person name="Rambo T."/>
            <person name="Currie J."/>
            <person name="Saski C."/>
            <person name="Kim H.-R."/>
            <person name="Collura K."/>
            <person name="Thompson S."/>
            <person name="Simmons J."/>
            <person name="Yang T.-J."/>
            <person name="Nah G."/>
            <person name="Patel A.J."/>
            <person name="Thurmond S."/>
            <person name="Henry D."/>
            <person name="Oates R."/>
            <person name="Palmer M."/>
            <person name="Pries G."/>
            <person name="Gibson J."/>
            <person name="Anderson H."/>
            <person name="Paradkar M."/>
            <person name="Crane L."/>
            <person name="Dale J."/>
            <person name="Carver M.B."/>
            <person name="Wood T."/>
            <person name="Frisch D."/>
            <person name="Engler F."/>
            <person name="Soderlund C."/>
            <person name="Palmer L.E."/>
            <person name="Teytelman L."/>
            <person name="Nascimento L."/>
            <person name="De la Bastide M."/>
            <person name="Spiegel L."/>
            <person name="Ware D."/>
            <person name="O'Shaughnessy A."/>
            <person name="Dike S."/>
            <person name="Dedhia N."/>
            <person name="Preston R."/>
            <person name="Huang E."/>
            <person name="Ferraro K."/>
            <person name="Kuit K."/>
            <person name="Miller B."/>
            <person name="Zutavern T."/>
            <person name="Katzenberger F."/>
            <person name="Muller S."/>
            <person name="Balija V."/>
            <person name="Martienssen R.A."/>
            <person name="Stein L."/>
            <person name="Minx P."/>
            <person name="Johnson D."/>
            <person name="Cordum H."/>
            <person name="Mardis E."/>
            <person name="Cheng Z."/>
            <person name="Jiang J."/>
            <person name="Wilson R."/>
            <person name="McCombie W.R."/>
            <person name="Wing R.A."/>
            <person name="Yuan Q."/>
            <person name="Ouyang S."/>
            <person name="Liu J."/>
            <person name="Jones K.M."/>
            <person name="Gansberger K."/>
            <person name="Moffat K."/>
            <person name="Hill J."/>
            <person name="Tsitrin T."/>
            <person name="Overton L."/>
            <person name="Bera J."/>
            <person name="Kim M."/>
            <person name="Jin S."/>
            <person name="Tallon L."/>
            <person name="Ciecko A."/>
            <person name="Pai G."/>
            <person name="Van Aken S."/>
            <person name="Utterback T."/>
            <person name="Reidmuller S."/>
            <person name="Bormann J."/>
            <person name="Feldblyum T."/>
            <person name="Hsiao J."/>
            <person name="Zismann V."/>
            <person name="Blunt S."/>
            <person name="de Vazeille A.R."/>
            <person name="Shaffer T."/>
            <person name="Koo H."/>
            <person name="Suh B."/>
            <person name="Yang Q."/>
            <person name="Haas B."/>
            <person name="Peterson J."/>
            <person name="Pertea M."/>
            <person name="Volfovsky N."/>
            <person name="Wortman J."/>
            <person name="White O."/>
            <person name="Salzberg S.L."/>
            <person name="Fraser C.M."/>
            <person name="Buell C.R."/>
            <person name="Messing J."/>
            <person name="Song R."/>
            <person name="Fuks G."/>
            <person name="Llaca V."/>
            <person name="Kovchak S."/>
            <person name="Young S."/>
            <person name="Bowers J.E."/>
            <person name="Paterson A.H."/>
            <person name="Johns M.A."/>
            <person name="Mao L."/>
            <person name="Pan H."/>
            <person name="Dean R.A."/>
        </authorList>
    </citation>
    <scope>NUCLEOTIDE SEQUENCE [LARGE SCALE GENOMIC DNA]</scope>
    <source>
        <strain>cv. Nipponbare</strain>
    </source>
</reference>
<reference key="3">
    <citation type="journal article" date="2005" name="Nature">
        <title>The map-based sequence of the rice genome.</title>
        <authorList>
            <consortium name="International rice genome sequencing project (IRGSP)"/>
        </authorList>
    </citation>
    <scope>NUCLEOTIDE SEQUENCE [LARGE SCALE GENOMIC DNA]</scope>
    <source>
        <strain>cv. Nipponbare</strain>
    </source>
</reference>
<reference key="4">
    <citation type="journal article" date="2008" name="Nucleic Acids Res.">
        <title>The rice annotation project database (RAP-DB): 2008 update.</title>
        <authorList>
            <consortium name="The rice annotation project (RAP)"/>
        </authorList>
    </citation>
    <scope>GENOME REANNOTATION</scope>
    <source>
        <strain>cv. Nipponbare</strain>
    </source>
</reference>
<reference key="5">
    <citation type="journal article" date="2013" name="Rice">
        <title>Improvement of the Oryza sativa Nipponbare reference genome using next generation sequence and optical map data.</title>
        <authorList>
            <person name="Kawahara Y."/>
            <person name="de la Bastide M."/>
            <person name="Hamilton J.P."/>
            <person name="Kanamori H."/>
            <person name="McCombie W.R."/>
            <person name="Ouyang S."/>
            <person name="Schwartz D.C."/>
            <person name="Tanaka T."/>
            <person name="Wu J."/>
            <person name="Zhou S."/>
            <person name="Childs K.L."/>
            <person name="Davidson R.M."/>
            <person name="Lin H."/>
            <person name="Quesada-Ocampo L."/>
            <person name="Vaillancourt B."/>
            <person name="Sakai H."/>
            <person name="Lee S.S."/>
            <person name="Kim J."/>
            <person name="Numa H."/>
            <person name="Itoh T."/>
            <person name="Buell C.R."/>
            <person name="Matsumoto T."/>
        </authorList>
    </citation>
    <scope>GENOME REANNOTATION</scope>
    <source>
        <strain>cv. Nipponbare</strain>
    </source>
</reference>
<reference key="6">
    <citation type="journal article" date="2005" name="PLoS Biol.">
        <title>The genomes of Oryza sativa: a history of duplications.</title>
        <authorList>
            <person name="Yu J."/>
            <person name="Wang J."/>
            <person name="Lin W."/>
            <person name="Li S."/>
            <person name="Li H."/>
            <person name="Zhou J."/>
            <person name="Ni P."/>
            <person name="Dong W."/>
            <person name="Hu S."/>
            <person name="Zeng C."/>
            <person name="Zhang J."/>
            <person name="Zhang Y."/>
            <person name="Li R."/>
            <person name="Xu Z."/>
            <person name="Li S."/>
            <person name="Li X."/>
            <person name="Zheng H."/>
            <person name="Cong L."/>
            <person name="Lin L."/>
            <person name="Yin J."/>
            <person name="Geng J."/>
            <person name="Li G."/>
            <person name="Shi J."/>
            <person name="Liu J."/>
            <person name="Lv H."/>
            <person name="Li J."/>
            <person name="Wang J."/>
            <person name="Deng Y."/>
            <person name="Ran L."/>
            <person name="Shi X."/>
            <person name="Wang X."/>
            <person name="Wu Q."/>
            <person name="Li C."/>
            <person name="Ren X."/>
            <person name="Wang J."/>
            <person name="Wang X."/>
            <person name="Li D."/>
            <person name="Liu D."/>
            <person name="Zhang X."/>
            <person name="Ji Z."/>
            <person name="Zhao W."/>
            <person name="Sun Y."/>
            <person name="Zhang Z."/>
            <person name="Bao J."/>
            <person name="Han Y."/>
            <person name="Dong L."/>
            <person name="Ji J."/>
            <person name="Chen P."/>
            <person name="Wu S."/>
            <person name="Liu J."/>
            <person name="Xiao Y."/>
            <person name="Bu D."/>
            <person name="Tan J."/>
            <person name="Yang L."/>
            <person name="Ye C."/>
            <person name="Zhang J."/>
            <person name="Xu J."/>
            <person name="Zhou Y."/>
            <person name="Yu Y."/>
            <person name="Zhang B."/>
            <person name="Zhuang S."/>
            <person name="Wei H."/>
            <person name="Liu B."/>
            <person name="Lei M."/>
            <person name="Yu H."/>
            <person name="Li Y."/>
            <person name="Xu H."/>
            <person name="Wei S."/>
            <person name="He X."/>
            <person name="Fang L."/>
            <person name="Zhang Z."/>
            <person name="Zhang Y."/>
            <person name="Huang X."/>
            <person name="Su Z."/>
            <person name="Tong W."/>
            <person name="Li J."/>
            <person name="Tong Z."/>
            <person name="Li S."/>
            <person name="Ye J."/>
            <person name="Wang L."/>
            <person name="Fang L."/>
            <person name="Lei T."/>
            <person name="Chen C.-S."/>
            <person name="Chen H.-C."/>
            <person name="Xu Z."/>
            <person name="Li H."/>
            <person name="Huang H."/>
            <person name="Zhang F."/>
            <person name="Xu H."/>
            <person name="Li N."/>
            <person name="Zhao C."/>
            <person name="Li S."/>
            <person name="Dong L."/>
            <person name="Huang Y."/>
            <person name="Li L."/>
            <person name="Xi Y."/>
            <person name="Qi Q."/>
            <person name="Li W."/>
            <person name="Zhang B."/>
            <person name="Hu W."/>
            <person name="Zhang Y."/>
            <person name="Tian X."/>
            <person name="Jiao Y."/>
            <person name="Liang X."/>
            <person name="Jin J."/>
            <person name="Gao L."/>
            <person name="Zheng W."/>
            <person name="Hao B."/>
            <person name="Liu S.-M."/>
            <person name="Wang W."/>
            <person name="Yuan L."/>
            <person name="Cao M."/>
            <person name="McDermott J."/>
            <person name="Samudrala R."/>
            <person name="Wang J."/>
            <person name="Wong G.K.-S."/>
            <person name="Yang H."/>
        </authorList>
    </citation>
    <scope>NUCLEOTIDE SEQUENCE [LARGE SCALE GENOMIC DNA]</scope>
    <source>
        <strain>cv. Nipponbare</strain>
    </source>
</reference>
<reference key="7">
    <citation type="journal article" date="2003" name="Science">
        <title>Collection, mapping, and annotation of over 28,000 cDNA clones from japonica rice.</title>
        <authorList>
            <consortium name="The rice full-length cDNA consortium"/>
        </authorList>
    </citation>
    <scope>NUCLEOTIDE SEQUENCE [LARGE SCALE MRNA]</scope>
    <source>
        <strain>cv. Nipponbare</strain>
    </source>
</reference>
<reference key="8">
    <citation type="journal article" date="2005" name="Plant Cell Physiol.">
        <title>Identification of 33 rice aquaporin genes and analysis of their expression and function.</title>
        <authorList>
            <person name="Sakurai J."/>
            <person name="Ishikawa F."/>
            <person name="Yamaguchi T."/>
            <person name="Uemura M."/>
            <person name="Maeshima M."/>
        </authorList>
    </citation>
    <scope>NOMENCLATURE</scope>
    <scope>TISSUE SPECIFICITY</scope>
</reference>
<feature type="chain" id="PRO_0000064025" description="Probable aquaporin TIP3-1">
    <location>
        <begin position="1"/>
        <end position="264"/>
    </location>
</feature>
<feature type="transmembrane region" description="Helical; Name=1" evidence="2">
    <location>
        <begin position="28"/>
        <end position="48"/>
    </location>
</feature>
<feature type="transmembrane region" description="Helical; Name=2" evidence="2">
    <location>
        <begin position="62"/>
        <end position="82"/>
    </location>
</feature>
<feature type="transmembrane region" description="Helical; Name=3" evidence="2">
    <location>
        <begin position="105"/>
        <end position="125"/>
    </location>
</feature>
<feature type="transmembrane region" description="Helical; Name=4" evidence="2">
    <location>
        <begin position="149"/>
        <end position="169"/>
    </location>
</feature>
<feature type="transmembrane region" description="Helical; Name=5" evidence="2">
    <location>
        <begin position="176"/>
        <end position="196"/>
    </location>
</feature>
<feature type="transmembrane region" description="Helical; Name=6" evidence="2">
    <location>
        <begin position="224"/>
        <end position="244"/>
    </location>
</feature>
<feature type="short sequence motif" description="NPA 1">
    <location>
        <begin position="90"/>
        <end position="92"/>
    </location>
</feature>
<feature type="short sequence motif" description="NPA 2">
    <location>
        <begin position="204"/>
        <end position="206"/>
    </location>
</feature>
<accession>Q9FWV6</accession>
<accession>A3C614</accession>
<accession>B7F4D9</accession>
<accession>Q0IWR8</accession>
<accession>Q7X6Y1</accession>
<proteinExistence type="evidence at transcript level"/>
<gene>
    <name type="primary">TIP3-1</name>
    <name type="synonym">TIP3</name>
    <name type="ordered locus">Os10g0492600</name>
    <name type="ordered locus">LOC_Os10g35050</name>
    <name type="ORF">OsJ_030736</name>
    <name type="ORF">OSJNBa0051D19.19</name>
</gene>
<name>TIP31_ORYSJ</name>